<comment type="function">
    <text evidence="1">May play a role in DNA repair. It seems to be involved in an RecBC-independent recombinational process of DNA repair. It may act with RecF and RecO.</text>
</comment>
<comment type="similarity">
    <text evidence="1">Belongs to the RecR family.</text>
</comment>
<reference key="1">
    <citation type="journal article" date="2005" name="PLoS Genet.">
        <title>Life in hot carbon monoxide: the complete genome sequence of Carboxydothermus hydrogenoformans Z-2901.</title>
        <authorList>
            <person name="Wu M."/>
            <person name="Ren Q."/>
            <person name="Durkin A.S."/>
            <person name="Daugherty S.C."/>
            <person name="Brinkac L.M."/>
            <person name="Dodson R.J."/>
            <person name="Madupu R."/>
            <person name="Sullivan S.A."/>
            <person name="Kolonay J.F."/>
            <person name="Nelson W.C."/>
            <person name="Tallon L.J."/>
            <person name="Jones K.M."/>
            <person name="Ulrich L.E."/>
            <person name="Gonzalez J.M."/>
            <person name="Zhulin I.B."/>
            <person name="Robb F.T."/>
            <person name="Eisen J.A."/>
        </authorList>
    </citation>
    <scope>NUCLEOTIDE SEQUENCE [LARGE SCALE GENOMIC DNA]</scope>
    <source>
        <strain>ATCC BAA-161 / DSM 6008 / Z-2901</strain>
    </source>
</reference>
<organism>
    <name type="scientific">Carboxydothermus hydrogenoformans (strain ATCC BAA-161 / DSM 6008 / Z-2901)</name>
    <dbReference type="NCBI Taxonomy" id="246194"/>
    <lineage>
        <taxon>Bacteria</taxon>
        <taxon>Bacillati</taxon>
        <taxon>Bacillota</taxon>
        <taxon>Clostridia</taxon>
        <taxon>Thermoanaerobacterales</taxon>
        <taxon>Thermoanaerobacteraceae</taxon>
        <taxon>Carboxydothermus</taxon>
    </lineage>
</organism>
<sequence length="199" mass="22054">MYFAEPVAKLIEHLAKLPGIGPKTAQKLALYLLEIPEEEARALAEAIITARKNTRYCSICFNLTDTDPCAICRNPGRNHRLLMVVEEAKDVAAMERTGSFNGIYHVLHGVLSPIKGIGPEDLKVRELLLRLSREPVEEIIIATNPTVEGEATAMYLASLLKPLNFKVTRIAHGLPVGSDIEYADELTIRKALEGRRVLE</sequence>
<evidence type="ECO:0000255" key="1">
    <source>
        <dbReference type="HAMAP-Rule" id="MF_00017"/>
    </source>
</evidence>
<keyword id="KW-0227">DNA damage</keyword>
<keyword id="KW-0233">DNA recombination</keyword>
<keyword id="KW-0234">DNA repair</keyword>
<keyword id="KW-0479">Metal-binding</keyword>
<keyword id="KW-1185">Reference proteome</keyword>
<keyword id="KW-0862">Zinc</keyword>
<keyword id="KW-0863">Zinc-finger</keyword>
<feature type="chain" id="PRO_1000001520" description="Recombination protein RecR">
    <location>
        <begin position="1"/>
        <end position="199"/>
    </location>
</feature>
<feature type="domain" description="Toprim" evidence="1">
    <location>
        <begin position="80"/>
        <end position="175"/>
    </location>
</feature>
<feature type="zinc finger region" description="C4-type" evidence="1">
    <location>
        <begin position="57"/>
        <end position="72"/>
    </location>
</feature>
<protein>
    <recommendedName>
        <fullName evidence="1">Recombination protein RecR</fullName>
    </recommendedName>
</protein>
<name>RECR_CARHZ</name>
<gene>
    <name evidence="1" type="primary">recR</name>
    <name type="ordered locus">CHY_2673</name>
</gene>
<proteinExistence type="inferred from homology"/>
<dbReference type="EMBL" id="CP000141">
    <property type="protein sequence ID" value="ABB13781.1"/>
    <property type="molecule type" value="Genomic_DNA"/>
</dbReference>
<dbReference type="RefSeq" id="WP_011345533.1">
    <property type="nucleotide sequence ID" value="NC_007503.1"/>
</dbReference>
<dbReference type="SMR" id="Q3A8S2"/>
<dbReference type="FunCoup" id="Q3A8S2">
    <property type="interactions" value="275"/>
</dbReference>
<dbReference type="STRING" id="246194.CHY_2673"/>
<dbReference type="KEGG" id="chy:CHY_2673"/>
<dbReference type="eggNOG" id="COG0353">
    <property type="taxonomic scope" value="Bacteria"/>
</dbReference>
<dbReference type="HOGENOM" id="CLU_060739_1_0_9"/>
<dbReference type="InParanoid" id="Q3A8S2"/>
<dbReference type="OrthoDB" id="9802672at2"/>
<dbReference type="Proteomes" id="UP000002706">
    <property type="component" value="Chromosome"/>
</dbReference>
<dbReference type="GO" id="GO:0003677">
    <property type="term" value="F:DNA binding"/>
    <property type="evidence" value="ECO:0007669"/>
    <property type="project" value="UniProtKB-UniRule"/>
</dbReference>
<dbReference type="GO" id="GO:0008270">
    <property type="term" value="F:zinc ion binding"/>
    <property type="evidence" value="ECO:0007669"/>
    <property type="project" value="UniProtKB-KW"/>
</dbReference>
<dbReference type="GO" id="GO:0006310">
    <property type="term" value="P:DNA recombination"/>
    <property type="evidence" value="ECO:0007669"/>
    <property type="project" value="UniProtKB-UniRule"/>
</dbReference>
<dbReference type="GO" id="GO:0006281">
    <property type="term" value="P:DNA repair"/>
    <property type="evidence" value="ECO:0007669"/>
    <property type="project" value="UniProtKB-UniRule"/>
</dbReference>
<dbReference type="CDD" id="cd01025">
    <property type="entry name" value="TOPRIM_recR"/>
    <property type="match status" value="1"/>
</dbReference>
<dbReference type="Gene3D" id="3.30.60.80">
    <property type="match status" value="1"/>
</dbReference>
<dbReference type="Gene3D" id="3.40.1360.10">
    <property type="match status" value="1"/>
</dbReference>
<dbReference type="Gene3D" id="6.10.250.240">
    <property type="match status" value="1"/>
</dbReference>
<dbReference type="Gene3D" id="1.10.8.420">
    <property type="entry name" value="RecR Domain 1"/>
    <property type="match status" value="1"/>
</dbReference>
<dbReference type="HAMAP" id="MF_00017">
    <property type="entry name" value="RecR"/>
    <property type="match status" value="1"/>
</dbReference>
<dbReference type="InterPro" id="IPR000093">
    <property type="entry name" value="DNA_Rcmb_RecR"/>
</dbReference>
<dbReference type="InterPro" id="IPR003583">
    <property type="entry name" value="Hlx-hairpin-Hlx_DNA-bd_motif"/>
</dbReference>
<dbReference type="InterPro" id="IPR023627">
    <property type="entry name" value="Rcmb_RecR"/>
</dbReference>
<dbReference type="InterPro" id="IPR015967">
    <property type="entry name" value="Rcmb_RecR_Znf"/>
</dbReference>
<dbReference type="InterPro" id="IPR006171">
    <property type="entry name" value="TOPRIM_dom"/>
</dbReference>
<dbReference type="InterPro" id="IPR034137">
    <property type="entry name" value="TOPRIM_RecR"/>
</dbReference>
<dbReference type="NCBIfam" id="TIGR00615">
    <property type="entry name" value="recR"/>
    <property type="match status" value="1"/>
</dbReference>
<dbReference type="PANTHER" id="PTHR30446">
    <property type="entry name" value="RECOMBINATION PROTEIN RECR"/>
    <property type="match status" value="1"/>
</dbReference>
<dbReference type="PANTHER" id="PTHR30446:SF0">
    <property type="entry name" value="RECOMBINATION PROTEIN RECR"/>
    <property type="match status" value="1"/>
</dbReference>
<dbReference type="Pfam" id="PF21175">
    <property type="entry name" value="RecR_C"/>
    <property type="match status" value="1"/>
</dbReference>
<dbReference type="Pfam" id="PF21176">
    <property type="entry name" value="RecR_HhH"/>
    <property type="match status" value="1"/>
</dbReference>
<dbReference type="Pfam" id="PF02132">
    <property type="entry name" value="RecR_ZnF"/>
    <property type="match status" value="1"/>
</dbReference>
<dbReference type="Pfam" id="PF13662">
    <property type="entry name" value="Toprim_4"/>
    <property type="match status" value="1"/>
</dbReference>
<dbReference type="SMART" id="SM00278">
    <property type="entry name" value="HhH1"/>
    <property type="match status" value="1"/>
</dbReference>
<dbReference type="SMART" id="SM00493">
    <property type="entry name" value="TOPRIM"/>
    <property type="match status" value="1"/>
</dbReference>
<dbReference type="SUPFAM" id="SSF111304">
    <property type="entry name" value="Recombination protein RecR"/>
    <property type="match status" value="1"/>
</dbReference>
<dbReference type="PROSITE" id="PS01300">
    <property type="entry name" value="RECR"/>
    <property type="match status" value="1"/>
</dbReference>
<dbReference type="PROSITE" id="PS50880">
    <property type="entry name" value="TOPRIM"/>
    <property type="match status" value="1"/>
</dbReference>
<accession>Q3A8S2</accession>